<feature type="chain" id="PRO_0000297882" description="Flap endonuclease Xni">
    <location>
        <begin position="1"/>
        <end position="251"/>
    </location>
</feature>
<feature type="domain" description="5'-3' exonuclease" evidence="1">
    <location>
        <begin position="160"/>
        <end position="249"/>
    </location>
</feature>
<feature type="region of interest" description="Interaction with DNA" evidence="1">
    <location>
        <begin position="184"/>
        <end position="189"/>
    </location>
</feature>
<feature type="binding site" evidence="1">
    <location>
        <position position="104"/>
    </location>
    <ligand>
        <name>Mg(2+)</name>
        <dbReference type="ChEBI" id="CHEBI:18420"/>
    </ligand>
</feature>
<feature type="binding site" evidence="1">
    <location>
        <position position="171"/>
    </location>
    <ligand>
        <name>K(+)</name>
        <dbReference type="ChEBI" id="CHEBI:29103"/>
    </ligand>
</feature>
<feature type="binding site" evidence="1">
    <location>
        <position position="172"/>
    </location>
    <ligand>
        <name>K(+)</name>
        <dbReference type="ChEBI" id="CHEBI:29103"/>
    </ligand>
</feature>
<feature type="binding site" evidence="1">
    <location>
        <position position="180"/>
    </location>
    <ligand>
        <name>K(+)</name>
        <dbReference type="ChEBI" id="CHEBI:29103"/>
    </ligand>
</feature>
<feature type="binding site" evidence="1">
    <location>
        <position position="182"/>
    </location>
    <ligand>
        <name>K(+)</name>
        <dbReference type="ChEBI" id="CHEBI:29103"/>
    </ligand>
</feature>
<feature type="binding site" evidence="1">
    <location>
        <position position="185"/>
    </location>
    <ligand>
        <name>K(+)</name>
        <dbReference type="ChEBI" id="CHEBI:29103"/>
    </ligand>
</feature>
<keyword id="KW-0238">DNA-binding</keyword>
<keyword id="KW-0255">Endonuclease</keyword>
<keyword id="KW-0378">Hydrolase</keyword>
<keyword id="KW-0460">Magnesium</keyword>
<keyword id="KW-0479">Metal-binding</keyword>
<keyword id="KW-0540">Nuclease</keyword>
<keyword id="KW-0630">Potassium</keyword>
<comment type="function">
    <text evidence="1">Has flap endonuclease activity. During DNA replication, flap endonucleases cleave the 5'-overhanging flap structure that is generated by displacement synthesis when DNA polymerase encounters the 5'-end of a downstream Okazaki fragment.</text>
</comment>
<comment type="cofactor">
    <cofactor evidence="1">
        <name>Mg(2+)</name>
        <dbReference type="ChEBI" id="CHEBI:18420"/>
    </cofactor>
    <text evidence="1">Binds 2 Mg(2+) per subunit. Only one magnesium ion has a direct interaction with the protein, the other interactions are indirect.</text>
</comment>
<comment type="cofactor">
    <cofactor evidence="1">
        <name>K(+)</name>
        <dbReference type="ChEBI" id="CHEBI:29103"/>
    </cofactor>
    <text evidence="1">Binds 1 K(+) per subunit. The potassium ion strongly increases the affinity for DNA.</text>
</comment>
<comment type="similarity">
    <text evidence="1">Belongs to the Xni family.</text>
</comment>
<comment type="sequence caution" evidence="2">
    <conflict type="erroneous initiation">
        <sequence resource="EMBL-CDS" id="ABB67216"/>
    </conflict>
    <text>Extended N-terminus.</text>
</comment>
<evidence type="ECO:0000255" key="1">
    <source>
        <dbReference type="HAMAP-Rule" id="MF_01192"/>
    </source>
</evidence>
<evidence type="ECO:0000305" key="2"/>
<reference key="1">
    <citation type="journal article" date="2005" name="Nucleic Acids Res.">
        <title>Genome dynamics and diversity of Shigella species, the etiologic agents of bacillary dysentery.</title>
        <authorList>
            <person name="Yang F."/>
            <person name="Yang J."/>
            <person name="Zhang X."/>
            <person name="Chen L."/>
            <person name="Jiang Y."/>
            <person name="Yan Y."/>
            <person name="Tang X."/>
            <person name="Wang J."/>
            <person name="Xiong Z."/>
            <person name="Dong J."/>
            <person name="Xue Y."/>
            <person name="Zhu Y."/>
            <person name="Xu X."/>
            <person name="Sun L."/>
            <person name="Chen S."/>
            <person name="Nie H."/>
            <person name="Peng J."/>
            <person name="Xu J."/>
            <person name="Wang Y."/>
            <person name="Yuan Z."/>
            <person name="Wen Y."/>
            <person name="Yao Z."/>
            <person name="Shen Y."/>
            <person name="Qiang B."/>
            <person name="Hou Y."/>
            <person name="Yu J."/>
            <person name="Jin Q."/>
        </authorList>
    </citation>
    <scope>NUCLEOTIDE SEQUENCE [LARGE SCALE GENOMIC DNA]</scope>
    <source>
        <strain>Sb227</strain>
    </source>
</reference>
<dbReference type="EC" id="3.1.-.-" evidence="1"/>
<dbReference type="EMBL" id="CP000036">
    <property type="protein sequence ID" value="ABB67216.1"/>
    <property type="status" value="ALT_INIT"/>
    <property type="molecule type" value="Genomic_DNA"/>
</dbReference>
<dbReference type="RefSeq" id="WP_000268232.1">
    <property type="nucleotide sequence ID" value="NC_007613.1"/>
</dbReference>
<dbReference type="SMR" id="Q31XJ2"/>
<dbReference type="GeneID" id="93779200"/>
<dbReference type="KEGG" id="sbo:SBO_2679"/>
<dbReference type="HOGENOM" id="CLU_004675_1_2_6"/>
<dbReference type="Proteomes" id="UP000007067">
    <property type="component" value="Chromosome"/>
</dbReference>
<dbReference type="GO" id="GO:0008409">
    <property type="term" value="F:5'-3' exonuclease activity"/>
    <property type="evidence" value="ECO:0007669"/>
    <property type="project" value="InterPro"/>
</dbReference>
<dbReference type="GO" id="GO:0017108">
    <property type="term" value="F:5'-flap endonuclease activity"/>
    <property type="evidence" value="ECO:0007669"/>
    <property type="project" value="UniProtKB-UniRule"/>
</dbReference>
<dbReference type="GO" id="GO:0003677">
    <property type="term" value="F:DNA binding"/>
    <property type="evidence" value="ECO:0007669"/>
    <property type="project" value="UniProtKB-UniRule"/>
</dbReference>
<dbReference type="GO" id="GO:0000287">
    <property type="term" value="F:magnesium ion binding"/>
    <property type="evidence" value="ECO:0007669"/>
    <property type="project" value="UniProtKB-UniRule"/>
</dbReference>
<dbReference type="GO" id="GO:0030955">
    <property type="term" value="F:potassium ion binding"/>
    <property type="evidence" value="ECO:0007669"/>
    <property type="project" value="UniProtKB-UniRule"/>
</dbReference>
<dbReference type="GO" id="GO:0033567">
    <property type="term" value="P:DNA replication, Okazaki fragment processing"/>
    <property type="evidence" value="ECO:0007669"/>
    <property type="project" value="UniProtKB-UniRule"/>
</dbReference>
<dbReference type="CDD" id="cd09898">
    <property type="entry name" value="H3TH_53EXO"/>
    <property type="match status" value="1"/>
</dbReference>
<dbReference type="CDD" id="cd09859">
    <property type="entry name" value="PIN_53EXO"/>
    <property type="match status" value="1"/>
</dbReference>
<dbReference type="FunFam" id="1.10.150.20:FF:000003">
    <property type="entry name" value="DNA polymerase I"/>
    <property type="match status" value="1"/>
</dbReference>
<dbReference type="FunFam" id="3.40.50.1010:FF:000011">
    <property type="entry name" value="Flap endonuclease Xni"/>
    <property type="match status" value="1"/>
</dbReference>
<dbReference type="Gene3D" id="1.10.150.20">
    <property type="entry name" value="5' to 3' exonuclease, C-terminal subdomain"/>
    <property type="match status" value="1"/>
</dbReference>
<dbReference type="Gene3D" id="3.40.50.1010">
    <property type="entry name" value="5'-nuclease"/>
    <property type="match status" value="1"/>
</dbReference>
<dbReference type="HAMAP" id="MF_01192">
    <property type="entry name" value="Xni"/>
    <property type="match status" value="1"/>
</dbReference>
<dbReference type="InterPro" id="IPR020046">
    <property type="entry name" value="5-3_exonucl_a-hlix_arch_N"/>
</dbReference>
<dbReference type="InterPro" id="IPR002421">
    <property type="entry name" value="5-3_exonuclease"/>
</dbReference>
<dbReference type="InterPro" id="IPR036279">
    <property type="entry name" value="5-3_exonuclease_C_sf"/>
</dbReference>
<dbReference type="InterPro" id="IPR020045">
    <property type="entry name" value="DNA_polI_H3TH"/>
</dbReference>
<dbReference type="InterPro" id="IPR038969">
    <property type="entry name" value="FEN"/>
</dbReference>
<dbReference type="InterPro" id="IPR008918">
    <property type="entry name" value="HhH2"/>
</dbReference>
<dbReference type="InterPro" id="IPR029060">
    <property type="entry name" value="PIN-like_dom_sf"/>
</dbReference>
<dbReference type="InterPro" id="IPR022895">
    <property type="entry name" value="Xni"/>
</dbReference>
<dbReference type="NCBIfam" id="NF007017">
    <property type="entry name" value="PRK09482.1"/>
    <property type="match status" value="1"/>
</dbReference>
<dbReference type="PANTHER" id="PTHR42646:SF2">
    <property type="entry name" value="5'-3' EXONUCLEASE FAMILY PROTEIN"/>
    <property type="match status" value="1"/>
</dbReference>
<dbReference type="PANTHER" id="PTHR42646">
    <property type="entry name" value="FLAP ENDONUCLEASE XNI"/>
    <property type="match status" value="1"/>
</dbReference>
<dbReference type="Pfam" id="PF01367">
    <property type="entry name" value="5_3_exonuc"/>
    <property type="match status" value="1"/>
</dbReference>
<dbReference type="Pfam" id="PF02739">
    <property type="entry name" value="5_3_exonuc_N"/>
    <property type="match status" value="1"/>
</dbReference>
<dbReference type="SMART" id="SM00475">
    <property type="entry name" value="53EXOc"/>
    <property type="match status" value="1"/>
</dbReference>
<dbReference type="SMART" id="SM00279">
    <property type="entry name" value="HhH2"/>
    <property type="match status" value="1"/>
</dbReference>
<dbReference type="SUPFAM" id="SSF47807">
    <property type="entry name" value="5' to 3' exonuclease, C-terminal subdomain"/>
    <property type="match status" value="1"/>
</dbReference>
<dbReference type="SUPFAM" id="SSF88723">
    <property type="entry name" value="PIN domain-like"/>
    <property type="match status" value="1"/>
</dbReference>
<accession>Q31XJ2</accession>
<name>XNI_SHIBS</name>
<protein>
    <recommendedName>
        <fullName evidence="1">Flap endonuclease Xni</fullName>
        <shortName evidence="1">FEN</shortName>
        <ecNumber evidence="1">3.1.-.-</ecNumber>
    </recommendedName>
</protein>
<gene>
    <name evidence="1" type="primary">xni</name>
    <name evidence="1" type="synonym">ygdG</name>
    <name type="ordered locus">SBO_2679</name>
</gene>
<organism>
    <name type="scientific">Shigella boydii serotype 4 (strain Sb227)</name>
    <dbReference type="NCBI Taxonomy" id="300268"/>
    <lineage>
        <taxon>Bacteria</taxon>
        <taxon>Pseudomonadati</taxon>
        <taxon>Pseudomonadota</taxon>
        <taxon>Gammaproteobacteria</taxon>
        <taxon>Enterobacterales</taxon>
        <taxon>Enterobacteriaceae</taxon>
        <taxon>Shigella</taxon>
    </lineage>
</organism>
<sequence length="251" mass="28166">MAVHLLIVDALNLIRRIHAVQGSPCVETCQHALDQLIMHSQPTHAVAVFDDENRSSGWRHQRLPDYKAGRPPMPEELHDEMPALRAAFEQRGVPCWSTSGNEADDLAATLAVKVTQAGHQATIVSTDKGYCQLLSPTLRIRDYFQKRWLDAPFIDKEFGVQPQQLPDYWGLAGISSSKVPGVAGIGPKSATQLLVEFQSLEGIYENLDAVAEKWRKKLETHKEMAFLCRDIARLQTDLHIDGNLQQLRLVR</sequence>
<proteinExistence type="inferred from homology"/>